<protein>
    <recommendedName>
        <fullName evidence="1">Outer-membrane lipoprotein LolB</fullName>
    </recommendedName>
</protein>
<proteinExistence type="inferred from homology"/>
<reference key="1">
    <citation type="journal article" date="2010" name="PLoS ONE">
        <title>The complete multipartite genome sequence of Cupriavidus necator JMP134, a versatile pollutant degrader.</title>
        <authorList>
            <person name="Lykidis A."/>
            <person name="Perez-Pantoja D."/>
            <person name="Ledger T."/>
            <person name="Mavromatis K."/>
            <person name="Anderson I.J."/>
            <person name="Ivanova N.N."/>
            <person name="Hooper S.D."/>
            <person name="Lapidus A."/>
            <person name="Lucas S."/>
            <person name="Gonzalez B."/>
            <person name="Kyrpides N.C."/>
        </authorList>
    </citation>
    <scope>NUCLEOTIDE SEQUENCE [LARGE SCALE GENOMIC DNA]</scope>
    <source>
        <strain>JMP134 / LMG 1197</strain>
    </source>
</reference>
<dbReference type="EMBL" id="CP000090">
    <property type="protein sequence ID" value="AAZ59726.1"/>
    <property type="molecule type" value="Genomic_DNA"/>
</dbReference>
<dbReference type="SMR" id="Q476F7"/>
<dbReference type="STRING" id="264198.Reut_A0344"/>
<dbReference type="KEGG" id="reu:Reut_A0344"/>
<dbReference type="eggNOG" id="COG3017">
    <property type="taxonomic scope" value="Bacteria"/>
</dbReference>
<dbReference type="HOGENOM" id="CLU_092816_3_0_4"/>
<dbReference type="GO" id="GO:0009279">
    <property type="term" value="C:cell outer membrane"/>
    <property type="evidence" value="ECO:0007669"/>
    <property type="project" value="UniProtKB-SubCell"/>
</dbReference>
<dbReference type="GO" id="GO:0044874">
    <property type="term" value="P:lipoprotein localization to outer membrane"/>
    <property type="evidence" value="ECO:0007669"/>
    <property type="project" value="UniProtKB-UniRule"/>
</dbReference>
<dbReference type="GO" id="GO:0015031">
    <property type="term" value="P:protein transport"/>
    <property type="evidence" value="ECO:0007669"/>
    <property type="project" value="UniProtKB-KW"/>
</dbReference>
<dbReference type="CDD" id="cd16326">
    <property type="entry name" value="LolB"/>
    <property type="match status" value="1"/>
</dbReference>
<dbReference type="Gene3D" id="2.50.20.10">
    <property type="entry name" value="Lipoprotein localisation LolA/LolB/LppX"/>
    <property type="match status" value="1"/>
</dbReference>
<dbReference type="HAMAP" id="MF_00233">
    <property type="entry name" value="LolB"/>
    <property type="match status" value="1"/>
</dbReference>
<dbReference type="InterPro" id="IPR029046">
    <property type="entry name" value="LolA/LolB/LppX"/>
</dbReference>
<dbReference type="InterPro" id="IPR004565">
    <property type="entry name" value="OM_lipoprot_LolB"/>
</dbReference>
<dbReference type="NCBIfam" id="TIGR00548">
    <property type="entry name" value="lolB"/>
    <property type="match status" value="1"/>
</dbReference>
<dbReference type="Pfam" id="PF03550">
    <property type="entry name" value="LolB"/>
    <property type="match status" value="1"/>
</dbReference>
<dbReference type="SUPFAM" id="SSF89392">
    <property type="entry name" value="Prokaryotic lipoproteins and lipoprotein localization factors"/>
    <property type="match status" value="1"/>
</dbReference>
<dbReference type="PROSITE" id="PS51257">
    <property type="entry name" value="PROKAR_LIPOPROTEIN"/>
    <property type="match status" value="1"/>
</dbReference>
<keyword id="KW-0998">Cell outer membrane</keyword>
<keyword id="KW-0143">Chaperone</keyword>
<keyword id="KW-0449">Lipoprotein</keyword>
<keyword id="KW-0472">Membrane</keyword>
<keyword id="KW-0564">Palmitate</keyword>
<keyword id="KW-0653">Protein transport</keyword>
<keyword id="KW-0732">Signal</keyword>
<keyword id="KW-0813">Transport</keyword>
<feature type="signal peptide" evidence="1">
    <location>
        <begin position="1"/>
        <end position="23"/>
    </location>
</feature>
<feature type="chain" id="PRO_1000021674" description="Outer-membrane lipoprotein LolB">
    <location>
        <begin position="24"/>
        <end position="207"/>
    </location>
</feature>
<feature type="region of interest" description="Disordered" evidence="2">
    <location>
        <begin position="171"/>
        <end position="207"/>
    </location>
</feature>
<feature type="lipid moiety-binding region" description="N-palmitoyl cysteine" evidence="1">
    <location>
        <position position="24"/>
    </location>
</feature>
<feature type="lipid moiety-binding region" description="S-diacylglycerol cysteine" evidence="1">
    <location>
        <position position="24"/>
    </location>
</feature>
<organism>
    <name type="scientific">Cupriavidus pinatubonensis (strain JMP 134 / LMG 1197)</name>
    <name type="common">Cupriavidus necator (strain JMP 134)</name>
    <dbReference type="NCBI Taxonomy" id="264198"/>
    <lineage>
        <taxon>Bacteria</taxon>
        <taxon>Pseudomonadati</taxon>
        <taxon>Pseudomonadota</taxon>
        <taxon>Betaproteobacteria</taxon>
        <taxon>Burkholderiales</taxon>
        <taxon>Burkholderiaceae</taxon>
        <taxon>Cupriavidus</taxon>
    </lineage>
</organism>
<name>LOLB_CUPPJ</name>
<accession>Q476F7</accession>
<gene>
    <name evidence="1" type="primary">lolB</name>
    <name type="ordered locus">Reut_A0344</name>
</gene>
<sequence length="207" mass="22300">MPTMNRSRRLALLCLGAPLLLAACASVAPSRGFDAGEGSASRHYTGRFSANYVRYGRDEGVQGSFRWEEQGRNVRLDLLSPLGQTLAVVTATPSGATLDLPNKPPRNAPEVDSLLEEALGFALPVAGMRDWLHGRPAPGRPAKSTRDTEGRLATLAQDGWSVRYVAWQEVPSASQAPAPRPRRIDLEREGGPTPLAVKLVIDPEEAP</sequence>
<comment type="function">
    <text evidence="1">Plays a critical role in the incorporation of lipoproteins in the outer membrane after they are released by the LolA protein.</text>
</comment>
<comment type="subunit">
    <text evidence="1">Monomer.</text>
</comment>
<comment type="subcellular location">
    <subcellularLocation>
        <location evidence="1">Cell outer membrane</location>
        <topology evidence="1">Lipid-anchor</topology>
    </subcellularLocation>
</comment>
<comment type="similarity">
    <text evidence="1">Belongs to the LolB family.</text>
</comment>
<evidence type="ECO:0000255" key="1">
    <source>
        <dbReference type="HAMAP-Rule" id="MF_00233"/>
    </source>
</evidence>
<evidence type="ECO:0000256" key="2">
    <source>
        <dbReference type="SAM" id="MobiDB-lite"/>
    </source>
</evidence>